<evidence type="ECO:0000255" key="1">
    <source>
        <dbReference type="HAMAP-Rule" id="MF_00627"/>
    </source>
</evidence>
<organism>
    <name type="scientific">Shewanella sp. (strain ANA-3)</name>
    <dbReference type="NCBI Taxonomy" id="94122"/>
    <lineage>
        <taxon>Bacteria</taxon>
        <taxon>Pseudomonadati</taxon>
        <taxon>Pseudomonadota</taxon>
        <taxon>Gammaproteobacteria</taxon>
        <taxon>Alteromonadales</taxon>
        <taxon>Shewanellaceae</taxon>
        <taxon>Shewanella</taxon>
    </lineage>
</organism>
<accession>A0L2Q3</accession>
<proteinExistence type="inferred from homology"/>
<protein>
    <recommendedName>
        <fullName evidence="1">L-threonine 3-dehydrogenase</fullName>
        <shortName evidence="1">TDH</shortName>
        <ecNumber evidence="1">1.1.1.103</ecNumber>
    </recommendedName>
</protein>
<feature type="chain" id="PRO_1000051657" description="L-threonine 3-dehydrogenase">
    <location>
        <begin position="1"/>
        <end position="341"/>
    </location>
</feature>
<feature type="active site" description="Charge relay system" evidence="1">
    <location>
        <position position="40"/>
    </location>
</feature>
<feature type="active site" description="Charge relay system" evidence="1">
    <location>
        <position position="43"/>
    </location>
</feature>
<feature type="binding site" evidence="1">
    <location>
        <position position="38"/>
    </location>
    <ligand>
        <name>Zn(2+)</name>
        <dbReference type="ChEBI" id="CHEBI:29105"/>
        <label>1</label>
        <note>catalytic</note>
    </ligand>
</feature>
<feature type="binding site" evidence="1">
    <location>
        <position position="63"/>
    </location>
    <ligand>
        <name>Zn(2+)</name>
        <dbReference type="ChEBI" id="CHEBI:29105"/>
        <label>1</label>
        <note>catalytic</note>
    </ligand>
</feature>
<feature type="binding site" evidence="1">
    <location>
        <position position="64"/>
    </location>
    <ligand>
        <name>Zn(2+)</name>
        <dbReference type="ChEBI" id="CHEBI:29105"/>
        <label>1</label>
        <note>catalytic</note>
    </ligand>
</feature>
<feature type="binding site" evidence="1">
    <location>
        <position position="93"/>
    </location>
    <ligand>
        <name>Zn(2+)</name>
        <dbReference type="ChEBI" id="CHEBI:29105"/>
        <label>2</label>
    </ligand>
</feature>
<feature type="binding site" evidence="1">
    <location>
        <position position="96"/>
    </location>
    <ligand>
        <name>Zn(2+)</name>
        <dbReference type="ChEBI" id="CHEBI:29105"/>
        <label>2</label>
    </ligand>
</feature>
<feature type="binding site" evidence="1">
    <location>
        <position position="99"/>
    </location>
    <ligand>
        <name>Zn(2+)</name>
        <dbReference type="ChEBI" id="CHEBI:29105"/>
        <label>2</label>
    </ligand>
</feature>
<feature type="binding site" evidence="1">
    <location>
        <position position="107"/>
    </location>
    <ligand>
        <name>Zn(2+)</name>
        <dbReference type="ChEBI" id="CHEBI:29105"/>
        <label>2</label>
    </ligand>
</feature>
<feature type="binding site" evidence="1">
    <location>
        <position position="175"/>
    </location>
    <ligand>
        <name>NAD(+)</name>
        <dbReference type="ChEBI" id="CHEBI:57540"/>
    </ligand>
</feature>
<feature type="binding site" evidence="1">
    <location>
        <position position="195"/>
    </location>
    <ligand>
        <name>NAD(+)</name>
        <dbReference type="ChEBI" id="CHEBI:57540"/>
    </ligand>
</feature>
<feature type="binding site" evidence="1">
    <location>
        <position position="200"/>
    </location>
    <ligand>
        <name>NAD(+)</name>
        <dbReference type="ChEBI" id="CHEBI:57540"/>
    </ligand>
</feature>
<feature type="binding site" evidence="1">
    <location>
        <begin position="262"/>
        <end position="264"/>
    </location>
    <ligand>
        <name>NAD(+)</name>
        <dbReference type="ChEBI" id="CHEBI:57540"/>
    </ligand>
</feature>
<feature type="binding site" evidence="1">
    <location>
        <begin position="286"/>
        <end position="287"/>
    </location>
    <ligand>
        <name>NAD(+)</name>
        <dbReference type="ChEBI" id="CHEBI:57540"/>
    </ligand>
</feature>
<feature type="site" description="Important for catalytic activity for the proton relay mechanism but does not participate directly in the coordination of zinc atom" evidence="1">
    <location>
        <position position="148"/>
    </location>
</feature>
<comment type="function">
    <text evidence="1">Catalyzes the NAD(+)-dependent oxidation of L-threonine to 2-amino-3-ketobutyrate.</text>
</comment>
<comment type="catalytic activity">
    <reaction evidence="1">
        <text>L-threonine + NAD(+) = (2S)-2-amino-3-oxobutanoate + NADH + H(+)</text>
        <dbReference type="Rhea" id="RHEA:13161"/>
        <dbReference type="ChEBI" id="CHEBI:15378"/>
        <dbReference type="ChEBI" id="CHEBI:57540"/>
        <dbReference type="ChEBI" id="CHEBI:57926"/>
        <dbReference type="ChEBI" id="CHEBI:57945"/>
        <dbReference type="ChEBI" id="CHEBI:78948"/>
        <dbReference type="EC" id="1.1.1.103"/>
    </reaction>
</comment>
<comment type="cofactor">
    <cofactor evidence="1">
        <name>Zn(2+)</name>
        <dbReference type="ChEBI" id="CHEBI:29105"/>
    </cofactor>
    <text evidence="1">Binds 2 Zn(2+) ions per subunit.</text>
</comment>
<comment type="pathway">
    <text evidence="1">Amino-acid degradation; L-threonine degradation via oxydo-reductase pathway; glycine from L-threonine: step 1/2.</text>
</comment>
<comment type="subunit">
    <text evidence="1">Homotetramer.</text>
</comment>
<comment type="subcellular location">
    <subcellularLocation>
        <location evidence="1">Cytoplasm</location>
    </subcellularLocation>
</comment>
<comment type="similarity">
    <text evidence="1">Belongs to the zinc-containing alcohol dehydrogenase family.</text>
</comment>
<keyword id="KW-0963">Cytoplasm</keyword>
<keyword id="KW-0479">Metal-binding</keyword>
<keyword id="KW-0520">NAD</keyword>
<keyword id="KW-0560">Oxidoreductase</keyword>
<keyword id="KW-0862">Zinc</keyword>
<dbReference type="EC" id="1.1.1.103" evidence="1"/>
<dbReference type="EMBL" id="CP000469">
    <property type="protein sequence ID" value="ABK50322.1"/>
    <property type="molecule type" value="Genomic_DNA"/>
</dbReference>
<dbReference type="RefSeq" id="WP_011624622.1">
    <property type="nucleotide sequence ID" value="NC_008577.1"/>
</dbReference>
<dbReference type="SMR" id="A0L2Q3"/>
<dbReference type="STRING" id="94122.Shewana3_4105"/>
<dbReference type="GeneID" id="94725931"/>
<dbReference type="KEGG" id="shn:Shewana3_4105"/>
<dbReference type="eggNOG" id="COG1063">
    <property type="taxonomic scope" value="Bacteria"/>
</dbReference>
<dbReference type="HOGENOM" id="CLU_026673_11_0_6"/>
<dbReference type="OrthoDB" id="9773078at2"/>
<dbReference type="UniPathway" id="UPA00046">
    <property type="reaction ID" value="UER00505"/>
</dbReference>
<dbReference type="Proteomes" id="UP000002589">
    <property type="component" value="Chromosome"/>
</dbReference>
<dbReference type="GO" id="GO:0005737">
    <property type="term" value="C:cytoplasm"/>
    <property type="evidence" value="ECO:0007669"/>
    <property type="project" value="UniProtKB-SubCell"/>
</dbReference>
<dbReference type="GO" id="GO:0008743">
    <property type="term" value="F:L-threonine 3-dehydrogenase activity"/>
    <property type="evidence" value="ECO:0007669"/>
    <property type="project" value="UniProtKB-UniRule"/>
</dbReference>
<dbReference type="GO" id="GO:0008270">
    <property type="term" value="F:zinc ion binding"/>
    <property type="evidence" value="ECO:0007669"/>
    <property type="project" value="UniProtKB-UniRule"/>
</dbReference>
<dbReference type="GO" id="GO:0019518">
    <property type="term" value="P:L-threonine catabolic process to glycine"/>
    <property type="evidence" value="ECO:0007669"/>
    <property type="project" value="UniProtKB-UniPathway"/>
</dbReference>
<dbReference type="Gene3D" id="3.90.180.10">
    <property type="entry name" value="Medium-chain alcohol dehydrogenases, catalytic domain"/>
    <property type="match status" value="1"/>
</dbReference>
<dbReference type="Gene3D" id="3.40.50.720">
    <property type="entry name" value="NAD(P)-binding Rossmann-like Domain"/>
    <property type="match status" value="1"/>
</dbReference>
<dbReference type="HAMAP" id="MF_00627">
    <property type="entry name" value="Thr_dehydrog"/>
    <property type="match status" value="1"/>
</dbReference>
<dbReference type="InterPro" id="IPR013149">
    <property type="entry name" value="ADH-like_C"/>
</dbReference>
<dbReference type="InterPro" id="IPR013154">
    <property type="entry name" value="ADH-like_N"/>
</dbReference>
<dbReference type="InterPro" id="IPR002328">
    <property type="entry name" value="ADH_Zn_CS"/>
</dbReference>
<dbReference type="InterPro" id="IPR011032">
    <property type="entry name" value="GroES-like_sf"/>
</dbReference>
<dbReference type="InterPro" id="IPR004627">
    <property type="entry name" value="L-Threonine_3-DHase"/>
</dbReference>
<dbReference type="InterPro" id="IPR036291">
    <property type="entry name" value="NAD(P)-bd_dom_sf"/>
</dbReference>
<dbReference type="InterPro" id="IPR020843">
    <property type="entry name" value="PKS_ER"/>
</dbReference>
<dbReference type="InterPro" id="IPR050129">
    <property type="entry name" value="Zn_alcohol_dh"/>
</dbReference>
<dbReference type="NCBIfam" id="NF003808">
    <property type="entry name" value="PRK05396.1"/>
    <property type="match status" value="1"/>
</dbReference>
<dbReference type="NCBIfam" id="TIGR00692">
    <property type="entry name" value="tdh"/>
    <property type="match status" value="1"/>
</dbReference>
<dbReference type="PANTHER" id="PTHR43401">
    <property type="entry name" value="L-THREONINE 3-DEHYDROGENASE"/>
    <property type="match status" value="1"/>
</dbReference>
<dbReference type="PANTHER" id="PTHR43401:SF2">
    <property type="entry name" value="L-THREONINE 3-DEHYDROGENASE"/>
    <property type="match status" value="1"/>
</dbReference>
<dbReference type="Pfam" id="PF08240">
    <property type="entry name" value="ADH_N"/>
    <property type="match status" value="1"/>
</dbReference>
<dbReference type="Pfam" id="PF00107">
    <property type="entry name" value="ADH_zinc_N"/>
    <property type="match status" value="1"/>
</dbReference>
<dbReference type="SMART" id="SM00829">
    <property type="entry name" value="PKS_ER"/>
    <property type="match status" value="1"/>
</dbReference>
<dbReference type="SUPFAM" id="SSF50129">
    <property type="entry name" value="GroES-like"/>
    <property type="match status" value="1"/>
</dbReference>
<dbReference type="SUPFAM" id="SSF51735">
    <property type="entry name" value="NAD(P)-binding Rossmann-fold domains"/>
    <property type="match status" value="1"/>
</dbReference>
<dbReference type="PROSITE" id="PS00059">
    <property type="entry name" value="ADH_ZINC"/>
    <property type="match status" value="1"/>
</dbReference>
<gene>
    <name evidence="1" type="primary">tdh</name>
    <name type="ordered locus">Shewana3_4105</name>
</gene>
<reference key="1">
    <citation type="submission" date="2006-09" db="EMBL/GenBank/DDBJ databases">
        <title>Complete sequence of chromosome 1 of Shewanella sp. ANA-3.</title>
        <authorList>
            <person name="Copeland A."/>
            <person name="Lucas S."/>
            <person name="Lapidus A."/>
            <person name="Barry K."/>
            <person name="Detter J.C."/>
            <person name="Glavina del Rio T."/>
            <person name="Hammon N."/>
            <person name="Israni S."/>
            <person name="Dalin E."/>
            <person name="Tice H."/>
            <person name="Pitluck S."/>
            <person name="Chertkov O."/>
            <person name="Brettin T."/>
            <person name="Bruce D."/>
            <person name="Han C."/>
            <person name="Tapia R."/>
            <person name="Gilna P."/>
            <person name="Schmutz J."/>
            <person name="Larimer F."/>
            <person name="Land M."/>
            <person name="Hauser L."/>
            <person name="Kyrpides N."/>
            <person name="Kim E."/>
            <person name="Newman D."/>
            <person name="Salticov C."/>
            <person name="Konstantinidis K."/>
            <person name="Klappenback J."/>
            <person name="Tiedje J."/>
            <person name="Richardson P."/>
        </authorList>
    </citation>
    <scope>NUCLEOTIDE SEQUENCE [LARGE SCALE GENOMIC DNA]</scope>
    <source>
        <strain>ANA-3</strain>
    </source>
</reference>
<sequence length="341" mass="37223">MKALSKLKAEKGIWLVDAPKPEMGHNDLLIKIKKTAICGTDMHIYNWDEWSQKTIPVPMVVGHEYVGEVVDIGQEVRGFKIGDRVSGEGHITCGHCRNCRAGRTHLCRNTSGVGVNREGSFAEYLVIPAFNAFKIPDDISDDLASIFDPFGNAVHTALSFDLVGEDVLITGAGPIGIMAAAVCRHVGARHVVITDVNEYRLELARKMGATRAVNVAQESLKDVMKELGMTEGFDVGLEMSGVPSAFHAMLDTMNHGGKIAMLGIPGGEMAIDWSKVIFKGLVIKGIYGREMFETWYKMASLIQSGLDISPIITHHYKIDDFQKGFDAMGSGQSGKVILSWD</sequence>
<name>TDH_SHESA</name>